<reference key="1">
    <citation type="journal article" date="2006" name="Appl. Environ. Microbiol.">
        <title>Genome sequence of the chemolithoautotrophic nitrite-oxidizing bacterium Nitrobacter winogradskyi Nb-255.</title>
        <authorList>
            <person name="Starkenburg S.R."/>
            <person name="Chain P.S.G."/>
            <person name="Sayavedra-Soto L.A."/>
            <person name="Hauser L."/>
            <person name="Land M.L."/>
            <person name="Larimer F.W."/>
            <person name="Malfatti S.A."/>
            <person name="Klotz M.G."/>
            <person name="Bottomley P.J."/>
            <person name="Arp D.J."/>
            <person name="Hickey W.J."/>
        </authorList>
    </citation>
    <scope>NUCLEOTIDE SEQUENCE [LARGE SCALE GENOMIC DNA]</scope>
    <source>
        <strain>ATCC 25391 / DSM 10237 / CIP 104748 / NCIMB 11846 / Nb-255</strain>
    </source>
</reference>
<proteinExistence type="inferred from homology"/>
<gene>
    <name evidence="1" type="primary">psd</name>
    <name type="ordered locus">Nwi_1234</name>
</gene>
<sequence>MPIDRQTLLSIAKSVRSGARSVRAQISPIHPKGYPFVGGFALATIILFWIWSPLGWIGTLLTIWCALFFRNPARVTPIREGLVVAPADGRISMIAPVVPPAELELGELPMVRISIFMSVFNCHVNRSPVAGRIERIVYRPGKFINAELDKASEDNERNALVISTPNNGLVGVIQIAGLIARRIVTFVHDGQTVETGERFGLIRFGSRLDVFLPEGTQVLVSEGQTTIAGETVLADFQQTDGRTFRSS</sequence>
<organism>
    <name type="scientific">Nitrobacter winogradskyi (strain ATCC 25391 / DSM 10237 / CIP 104748 / NCIMB 11846 / Nb-255)</name>
    <dbReference type="NCBI Taxonomy" id="323098"/>
    <lineage>
        <taxon>Bacteria</taxon>
        <taxon>Pseudomonadati</taxon>
        <taxon>Pseudomonadota</taxon>
        <taxon>Alphaproteobacteria</taxon>
        <taxon>Hyphomicrobiales</taxon>
        <taxon>Nitrobacteraceae</taxon>
        <taxon>Nitrobacter</taxon>
    </lineage>
</organism>
<dbReference type="EC" id="4.1.1.65" evidence="1"/>
<dbReference type="EMBL" id="CP000115">
    <property type="protein sequence ID" value="ABA04496.1"/>
    <property type="molecule type" value="Genomic_DNA"/>
</dbReference>
<dbReference type="RefSeq" id="WP_011314525.1">
    <property type="nucleotide sequence ID" value="NC_007406.1"/>
</dbReference>
<dbReference type="STRING" id="323098.Nwi_1234"/>
<dbReference type="KEGG" id="nwi:Nwi_1234"/>
<dbReference type="eggNOG" id="COG0688">
    <property type="taxonomic scope" value="Bacteria"/>
</dbReference>
<dbReference type="HOGENOM" id="CLU_072492_0_0_5"/>
<dbReference type="OrthoDB" id="9790893at2"/>
<dbReference type="UniPathway" id="UPA00558">
    <property type="reaction ID" value="UER00616"/>
</dbReference>
<dbReference type="Proteomes" id="UP000002531">
    <property type="component" value="Chromosome"/>
</dbReference>
<dbReference type="GO" id="GO:0005886">
    <property type="term" value="C:plasma membrane"/>
    <property type="evidence" value="ECO:0007669"/>
    <property type="project" value="UniProtKB-SubCell"/>
</dbReference>
<dbReference type="GO" id="GO:0004609">
    <property type="term" value="F:phosphatidylserine decarboxylase activity"/>
    <property type="evidence" value="ECO:0007669"/>
    <property type="project" value="UniProtKB-UniRule"/>
</dbReference>
<dbReference type="GO" id="GO:0006646">
    <property type="term" value="P:phosphatidylethanolamine biosynthetic process"/>
    <property type="evidence" value="ECO:0007669"/>
    <property type="project" value="UniProtKB-UniRule"/>
</dbReference>
<dbReference type="HAMAP" id="MF_00664">
    <property type="entry name" value="PS_decarb_PSD_A"/>
    <property type="match status" value="1"/>
</dbReference>
<dbReference type="InterPro" id="IPR003817">
    <property type="entry name" value="PS_Dcarbxylase"/>
</dbReference>
<dbReference type="InterPro" id="IPR033175">
    <property type="entry name" value="PSD-A"/>
</dbReference>
<dbReference type="NCBIfam" id="NF003677">
    <property type="entry name" value="PRK05305.1-1"/>
    <property type="match status" value="1"/>
</dbReference>
<dbReference type="NCBIfam" id="NF003678">
    <property type="entry name" value="PRK05305.1-2"/>
    <property type="match status" value="1"/>
</dbReference>
<dbReference type="NCBIfam" id="NF003679">
    <property type="entry name" value="PRK05305.1-3"/>
    <property type="match status" value="1"/>
</dbReference>
<dbReference type="NCBIfam" id="NF003685">
    <property type="entry name" value="PRK05305.2-5"/>
    <property type="match status" value="1"/>
</dbReference>
<dbReference type="PANTHER" id="PTHR35809">
    <property type="entry name" value="ARCHAETIDYLSERINE DECARBOXYLASE PROENZYME-RELATED"/>
    <property type="match status" value="1"/>
</dbReference>
<dbReference type="PANTHER" id="PTHR35809:SF1">
    <property type="entry name" value="ARCHAETIDYLSERINE DECARBOXYLASE PROENZYME-RELATED"/>
    <property type="match status" value="1"/>
</dbReference>
<dbReference type="Pfam" id="PF02666">
    <property type="entry name" value="PS_Dcarbxylase"/>
    <property type="match status" value="1"/>
</dbReference>
<evidence type="ECO:0000255" key="1">
    <source>
        <dbReference type="HAMAP-Rule" id="MF_00664"/>
    </source>
</evidence>
<keyword id="KW-1003">Cell membrane</keyword>
<keyword id="KW-0210">Decarboxylase</keyword>
<keyword id="KW-0444">Lipid biosynthesis</keyword>
<keyword id="KW-0443">Lipid metabolism</keyword>
<keyword id="KW-0456">Lyase</keyword>
<keyword id="KW-0472">Membrane</keyword>
<keyword id="KW-0594">Phospholipid biosynthesis</keyword>
<keyword id="KW-1208">Phospholipid metabolism</keyword>
<keyword id="KW-0670">Pyruvate</keyword>
<keyword id="KW-1185">Reference proteome</keyword>
<keyword id="KW-0865">Zymogen</keyword>
<comment type="function">
    <text evidence="1">Catalyzes the formation of phosphatidylethanolamine (PtdEtn) from phosphatidylserine (PtdSer).</text>
</comment>
<comment type="catalytic activity">
    <reaction evidence="1">
        <text>a 1,2-diacyl-sn-glycero-3-phospho-L-serine + H(+) = a 1,2-diacyl-sn-glycero-3-phosphoethanolamine + CO2</text>
        <dbReference type="Rhea" id="RHEA:20828"/>
        <dbReference type="ChEBI" id="CHEBI:15378"/>
        <dbReference type="ChEBI" id="CHEBI:16526"/>
        <dbReference type="ChEBI" id="CHEBI:57262"/>
        <dbReference type="ChEBI" id="CHEBI:64612"/>
        <dbReference type="EC" id="4.1.1.65"/>
    </reaction>
</comment>
<comment type="cofactor">
    <cofactor evidence="1">
        <name>pyruvate</name>
        <dbReference type="ChEBI" id="CHEBI:15361"/>
    </cofactor>
    <text evidence="1">Binds 1 pyruvoyl group covalently per subunit.</text>
</comment>
<comment type="pathway">
    <text evidence="1">Phospholipid metabolism; phosphatidylethanolamine biosynthesis; phosphatidylethanolamine from CDP-diacylglycerol: step 2/2.</text>
</comment>
<comment type="subunit">
    <text evidence="1">Heterodimer of a large membrane-associated beta subunit and a small pyruvoyl-containing alpha subunit.</text>
</comment>
<comment type="subcellular location">
    <subcellularLocation>
        <location evidence="1">Cell membrane</location>
        <topology evidence="1">Peripheral membrane protein</topology>
    </subcellularLocation>
</comment>
<comment type="PTM">
    <text evidence="1">Is synthesized initially as an inactive proenzyme. Formation of the active enzyme involves a self-maturation process in which the active site pyruvoyl group is generated from an internal serine residue via an autocatalytic post-translational modification. Two non-identical subunits are generated from the proenzyme in this reaction, and the pyruvate is formed at the N-terminus of the alpha chain, which is derived from the carboxyl end of the proenzyme. The post-translation cleavage follows an unusual pathway, termed non-hydrolytic serinolysis, in which the side chain hydroxyl group of the serine supplies its oxygen atom to form the C-terminus of the beta chain, while the remainder of the serine residue undergoes an oxidative deamination to produce ammonia and the pyruvoyl prosthetic group on the alpha chain.</text>
</comment>
<comment type="similarity">
    <text evidence="1">Belongs to the phosphatidylserine decarboxylase family. PSD-A subfamily.</text>
</comment>
<protein>
    <recommendedName>
        <fullName evidence="1">Phosphatidylserine decarboxylase proenzyme</fullName>
        <ecNumber evidence="1">4.1.1.65</ecNumber>
    </recommendedName>
    <component>
        <recommendedName>
            <fullName evidence="1">Phosphatidylserine decarboxylase alpha chain</fullName>
        </recommendedName>
    </component>
    <component>
        <recommendedName>
            <fullName evidence="1">Phosphatidylserine decarboxylase beta chain</fullName>
        </recommendedName>
    </component>
</protein>
<name>PSD_NITWN</name>
<feature type="chain" id="PRO_0000262235" description="Phosphatidylserine decarboxylase beta chain" evidence="1">
    <location>
        <begin position="1"/>
        <end position="205"/>
    </location>
</feature>
<feature type="chain" id="PRO_0000262236" description="Phosphatidylserine decarboxylase alpha chain" evidence="1">
    <location>
        <begin position="206"/>
        <end position="247"/>
    </location>
</feature>
<feature type="active site" description="Schiff-base intermediate with substrate; via pyruvic acid" evidence="1">
    <location>
        <position position="206"/>
    </location>
</feature>
<feature type="site" description="Cleavage (non-hydrolytic); by autocatalysis" evidence="1">
    <location>
        <begin position="205"/>
        <end position="206"/>
    </location>
</feature>
<feature type="modified residue" description="Pyruvic acid (Ser); by autocatalysis" evidence="1">
    <location>
        <position position="206"/>
    </location>
</feature>
<accession>Q3ST95</accession>